<feature type="signal peptide" evidence="1">
    <location>
        <begin position="1"/>
        <end position="22"/>
    </location>
</feature>
<feature type="chain" id="PRO_0000228851" description="Uncharacterized protein YjdP">
    <location>
        <begin position="23"/>
        <end position="109"/>
    </location>
</feature>
<feature type="region of interest" description="Disordered" evidence="2">
    <location>
        <begin position="39"/>
        <end position="109"/>
    </location>
</feature>
<feature type="compositionally biased region" description="Basic and acidic residues" evidence="2">
    <location>
        <begin position="41"/>
        <end position="109"/>
    </location>
</feature>
<name>YJDP_SHIBS</name>
<keyword id="KW-0732">Signal</keyword>
<protein>
    <recommendedName>
        <fullName>Uncharacterized protein YjdP</fullName>
    </recommendedName>
</protein>
<accession>Q31TR2</accession>
<organism>
    <name type="scientific">Shigella boydii serotype 4 (strain Sb227)</name>
    <dbReference type="NCBI Taxonomy" id="300268"/>
    <lineage>
        <taxon>Bacteria</taxon>
        <taxon>Pseudomonadati</taxon>
        <taxon>Pseudomonadota</taxon>
        <taxon>Gammaproteobacteria</taxon>
        <taxon>Enterobacterales</taxon>
        <taxon>Enterobacteriaceae</taxon>
        <taxon>Shigella</taxon>
    </lineage>
</organism>
<reference key="1">
    <citation type="journal article" date="2005" name="Nucleic Acids Res.">
        <title>Genome dynamics and diversity of Shigella species, the etiologic agents of bacillary dysentery.</title>
        <authorList>
            <person name="Yang F."/>
            <person name="Yang J."/>
            <person name="Zhang X."/>
            <person name="Chen L."/>
            <person name="Jiang Y."/>
            <person name="Yan Y."/>
            <person name="Tang X."/>
            <person name="Wang J."/>
            <person name="Xiong Z."/>
            <person name="Dong J."/>
            <person name="Xue Y."/>
            <person name="Zhu Y."/>
            <person name="Xu X."/>
            <person name="Sun L."/>
            <person name="Chen S."/>
            <person name="Nie H."/>
            <person name="Peng J."/>
            <person name="Xu J."/>
            <person name="Wang Y."/>
            <person name="Yuan Z."/>
            <person name="Wen Y."/>
            <person name="Yao Z."/>
            <person name="Shen Y."/>
            <person name="Qiang B."/>
            <person name="Hou Y."/>
            <person name="Yu J."/>
            <person name="Jin Q."/>
        </authorList>
    </citation>
    <scope>NUCLEOTIDE SEQUENCE [LARGE SCALE GENOMIC DNA]</scope>
    <source>
        <strain>Sb227</strain>
    </source>
</reference>
<dbReference type="EMBL" id="CP000036">
    <property type="protein sequence ID" value="ABB68546.1"/>
    <property type="molecule type" value="Genomic_DNA"/>
</dbReference>
<dbReference type="RefSeq" id="WP_000819746.1">
    <property type="nucleotide sequence ID" value="NC_007613.1"/>
</dbReference>
<dbReference type="SMR" id="Q31TR2"/>
<dbReference type="GeneID" id="93777743"/>
<dbReference type="KEGG" id="sbo:SBO_4117"/>
<dbReference type="HOGENOM" id="CLU_176118_0_0_6"/>
<dbReference type="Proteomes" id="UP000007067">
    <property type="component" value="Chromosome"/>
</dbReference>
<dbReference type="InterPro" id="IPR048164">
    <property type="entry name" value="YjdP-like"/>
</dbReference>
<dbReference type="NCBIfam" id="NF041443">
    <property type="entry name" value="DDRRRQL_YjdP"/>
    <property type="match status" value="1"/>
</dbReference>
<gene>
    <name type="primary">yjdP</name>
    <name type="ordered locus">SBO_4117</name>
</gene>
<sequence>MKRFPLFLLFTLLTLSTVPAQADIIDDTIGNIQQAINDAYNPDRGRDYEDSRDDGWQREVSDDRRRQYDDRRRQFEDRRRQLDDRQRQLDQERRQLEDEERRMEDEYGR</sequence>
<evidence type="ECO:0000255" key="1"/>
<evidence type="ECO:0000256" key="2">
    <source>
        <dbReference type="SAM" id="MobiDB-lite"/>
    </source>
</evidence>
<proteinExistence type="inferred from homology"/>